<comment type="function">
    <text evidence="1">Part of the Tol-Pal system, which plays a role in outer membrane invagination during cell division and is important for maintaining outer membrane integrity.</text>
</comment>
<comment type="subunit">
    <text evidence="1">The Tol-Pal system is composed of five core proteins: the inner membrane proteins TolA, TolQ and TolR, the periplasmic protein TolB and the outer membrane protein Pal. They form a network linking the inner and outer membranes and the peptidoglycan layer.</text>
</comment>
<comment type="subcellular location">
    <subcellularLocation>
        <location evidence="1">Periplasm</location>
    </subcellularLocation>
</comment>
<comment type="similarity">
    <text evidence="1">Belongs to the TolB family.</text>
</comment>
<comment type="sequence caution" evidence="2">
    <conflict type="erroneous initiation">
        <sequence resource="EMBL-CDS" id="ABA50587"/>
    </conflict>
</comment>
<keyword id="KW-0131">Cell cycle</keyword>
<keyword id="KW-0132">Cell division</keyword>
<keyword id="KW-0574">Periplasm</keyword>
<keyword id="KW-0732">Signal</keyword>
<name>TOLB_BURP1</name>
<organism>
    <name type="scientific">Burkholderia pseudomallei (strain 1710b)</name>
    <dbReference type="NCBI Taxonomy" id="320372"/>
    <lineage>
        <taxon>Bacteria</taxon>
        <taxon>Pseudomonadati</taxon>
        <taxon>Pseudomonadota</taxon>
        <taxon>Betaproteobacteria</taxon>
        <taxon>Burkholderiales</taxon>
        <taxon>Burkholderiaceae</taxon>
        <taxon>Burkholderia</taxon>
        <taxon>pseudomallei group</taxon>
    </lineage>
</organism>
<protein>
    <recommendedName>
        <fullName evidence="1">Tol-Pal system protein TolB</fullName>
    </recommendedName>
</protein>
<proteinExistence type="inferred from homology"/>
<dbReference type="EMBL" id="CP000124">
    <property type="protein sequence ID" value="ABA50587.1"/>
    <property type="status" value="ALT_INIT"/>
    <property type="molecule type" value="Genomic_DNA"/>
</dbReference>
<dbReference type="RefSeq" id="WP_004533572.1">
    <property type="nucleotide sequence ID" value="NC_007434.1"/>
</dbReference>
<dbReference type="SMR" id="Q3JP75"/>
<dbReference type="EnsemblBacteria" id="ABA50587">
    <property type="protein sequence ID" value="ABA50587"/>
    <property type="gene ID" value="BURPS1710b_3256"/>
</dbReference>
<dbReference type="GeneID" id="93061351"/>
<dbReference type="KEGG" id="bpm:BURPS1710b_3256"/>
<dbReference type="HOGENOM" id="CLU_047123_0_0_4"/>
<dbReference type="Proteomes" id="UP000002700">
    <property type="component" value="Chromosome I"/>
</dbReference>
<dbReference type="GO" id="GO:0042597">
    <property type="term" value="C:periplasmic space"/>
    <property type="evidence" value="ECO:0007669"/>
    <property type="project" value="UniProtKB-SubCell"/>
</dbReference>
<dbReference type="GO" id="GO:0051301">
    <property type="term" value="P:cell division"/>
    <property type="evidence" value="ECO:0007669"/>
    <property type="project" value="UniProtKB-UniRule"/>
</dbReference>
<dbReference type="GO" id="GO:0017038">
    <property type="term" value="P:protein import"/>
    <property type="evidence" value="ECO:0007669"/>
    <property type="project" value="InterPro"/>
</dbReference>
<dbReference type="Gene3D" id="2.120.10.30">
    <property type="entry name" value="TolB, C-terminal domain"/>
    <property type="match status" value="1"/>
</dbReference>
<dbReference type="Gene3D" id="3.40.50.10070">
    <property type="entry name" value="TolB, N-terminal domain"/>
    <property type="match status" value="1"/>
</dbReference>
<dbReference type="HAMAP" id="MF_00671">
    <property type="entry name" value="TolB"/>
    <property type="match status" value="1"/>
</dbReference>
<dbReference type="InterPro" id="IPR011042">
    <property type="entry name" value="6-blade_b-propeller_TolB-like"/>
</dbReference>
<dbReference type="InterPro" id="IPR011659">
    <property type="entry name" value="PD40"/>
</dbReference>
<dbReference type="InterPro" id="IPR014167">
    <property type="entry name" value="Tol-Pal_TolB"/>
</dbReference>
<dbReference type="InterPro" id="IPR007195">
    <property type="entry name" value="TolB_N"/>
</dbReference>
<dbReference type="NCBIfam" id="TIGR02800">
    <property type="entry name" value="propeller_TolB"/>
    <property type="match status" value="1"/>
</dbReference>
<dbReference type="PANTHER" id="PTHR36842:SF1">
    <property type="entry name" value="PROTEIN TOLB"/>
    <property type="match status" value="1"/>
</dbReference>
<dbReference type="PANTHER" id="PTHR36842">
    <property type="entry name" value="PROTEIN TOLB HOMOLOG"/>
    <property type="match status" value="1"/>
</dbReference>
<dbReference type="Pfam" id="PF07676">
    <property type="entry name" value="PD40"/>
    <property type="match status" value="5"/>
</dbReference>
<dbReference type="Pfam" id="PF04052">
    <property type="entry name" value="TolB_N"/>
    <property type="match status" value="1"/>
</dbReference>
<dbReference type="SUPFAM" id="SSF52964">
    <property type="entry name" value="TolB, N-terminal domain"/>
    <property type="match status" value="1"/>
</dbReference>
<dbReference type="SUPFAM" id="SSF69304">
    <property type="entry name" value="Tricorn protease N-terminal domain"/>
    <property type="match status" value="1"/>
</dbReference>
<accession>Q3JP75</accession>
<evidence type="ECO:0000255" key="1">
    <source>
        <dbReference type="HAMAP-Rule" id="MF_00671"/>
    </source>
</evidence>
<evidence type="ECO:0000305" key="2"/>
<reference key="1">
    <citation type="journal article" date="2010" name="Genome Biol. Evol.">
        <title>Continuing evolution of Burkholderia mallei through genome reduction and large-scale rearrangements.</title>
        <authorList>
            <person name="Losada L."/>
            <person name="Ronning C.M."/>
            <person name="DeShazer D."/>
            <person name="Woods D."/>
            <person name="Fedorova N."/>
            <person name="Kim H.S."/>
            <person name="Shabalina S.A."/>
            <person name="Pearson T.R."/>
            <person name="Brinkac L."/>
            <person name="Tan P."/>
            <person name="Nandi T."/>
            <person name="Crabtree J."/>
            <person name="Badger J."/>
            <person name="Beckstrom-Sternberg S."/>
            <person name="Saqib M."/>
            <person name="Schutzer S.E."/>
            <person name="Keim P."/>
            <person name="Nierman W.C."/>
        </authorList>
    </citation>
    <scope>NUCLEOTIDE SEQUENCE [LARGE SCALE GENOMIC DNA]</scope>
    <source>
        <strain>1710b</strain>
    </source>
</reference>
<gene>
    <name evidence="1" type="primary">tolB</name>
    <name type="ordered locus">BURPS1710b_3256</name>
</gene>
<feature type="signal peptide" evidence="1">
    <location>
        <begin position="1"/>
        <end position="26"/>
    </location>
</feature>
<feature type="chain" id="PRO_0000259035" description="Tol-Pal system protein TolB" evidence="1">
    <location>
        <begin position="27"/>
        <end position="433"/>
    </location>
</feature>
<sequence>MSLMTKLGFRALVASCLIAAGGAAHAQVNVLITGVGSTQFPIATANFVNEASLPQQVTSVVRGDLARSGKFSNVDAGSTPVPETASVDFGAWKAKGANAFVAGSVNREPNGQYKVNFILYDTVKQQSLGGLSLTTSNDNEGMRKTGHKIADYIYQKLLGVRGVFNTRLSYVQRTGNVYKLLISDSDGQNAIPALTSKEPIISPAWSPSGTKVAYVSFELRKPVVYIHDLPTGRRYVISNQKGNNSAPAWSPDGQTLAVALSLTGNTQIYSVSSTGTGLRRLTRSSSIDTEPFYSPDGKWIYFTSDRGGAPQIYRMPAEGESAGAAQRVTFTGSYNTSPRVSPDGKLLAYISRTGGGFKLYVQDLQSGAANAVTNTTRDESPSFAANGQYILYATQSGGRSVLAAVPSDGSAPPQILSVQGGAIREPSWGPFMQ</sequence>